<comment type="function">
    <text evidence="1">Oxidative deamination of D-amino acids.</text>
</comment>
<comment type="catalytic activity">
    <reaction evidence="1">
        <text>a D-alpha-amino acid + A + H2O = a 2-oxocarboxylate + AH2 + NH4(+)</text>
        <dbReference type="Rhea" id="RHEA:18125"/>
        <dbReference type="ChEBI" id="CHEBI:13193"/>
        <dbReference type="ChEBI" id="CHEBI:15377"/>
        <dbReference type="ChEBI" id="CHEBI:17499"/>
        <dbReference type="ChEBI" id="CHEBI:28938"/>
        <dbReference type="ChEBI" id="CHEBI:35179"/>
        <dbReference type="ChEBI" id="CHEBI:59871"/>
    </reaction>
</comment>
<comment type="cofactor">
    <cofactor evidence="1">
        <name>FAD</name>
        <dbReference type="ChEBI" id="CHEBI:57692"/>
    </cofactor>
</comment>
<comment type="similarity">
    <text evidence="1">Belongs to the DadA oxidoreductase family.</text>
</comment>
<proteinExistence type="inferred from homology"/>
<evidence type="ECO:0000255" key="1">
    <source>
        <dbReference type="HAMAP-Rule" id="MF_01202"/>
    </source>
</evidence>
<accession>Q9KTV1</accession>
<reference key="1">
    <citation type="journal article" date="2000" name="Nature">
        <title>DNA sequence of both chromosomes of the cholera pathogen Vibrio cholerae.</title>
        <authorList>
            <person name="Heidelberg J.F."/>
            <person name="Eisen J.A."/>
            <person name="Nelson W.C."/>
            <person name="Clayton R.A."/>
            <person name="Gwinn M.L."/>
            <person name="Dodson R.J."/>
            <person name="Haft D.H."/>
            <person name="Hickey E.K."/>
            <person name="Peterson J.D."/>
            <person name="Umayam L.A."/>
            <person name="Gill S.R."/>
            <person name="Nelson K.E."/>
            <person name="Read T.D."/>
            <person name="Tettelin H."/>
            <person name="Richardson D.L."/>
            <person name="Ermolaeva M.D."/>
            <person name="Vamathevan J.J."/>
            <person name="Bass S."/>
            <person name="Qin H."/>
            <person name="Dragoi I."/>
            <person name="Sellers P."/>
            <person name="McDonald L.A."/>
            <person name="Utterback T.R."/>
            <person name="Fleischmann R.D."/>
            <person name="Nierman W.C."/>
            <person name="White O."/>
            <person name="Salzberg S.L."/>
            <person name="Smith H.O."/>
            <person name="Colwell R.R."/>
            <person name="Mekalanos J.J."/>
            <person name="Venter J.C."/>
            <person name="Fraser C.M."/>
        </authorList>
    </citation>
    <scope>NUCLEOTIDE SEQUENCE [LARGE SCALE GENOMIC DNA]</scope>
    <source>
        <strain>ATCC 39315 / El Tor Inaba N16961</strain>
    </source>
</reference>
<gene>
    <name evidence="1" type="primary">dadA</name>
    <name type="ordered locus">VC_0786</name>
</gene>
<organism>
    <name type="scientific">Vibrio cholerae serotype O1 (strain ATCC 39315 / El Tor Inaba N16961)</name>
    <dbReference type="NCBI Taxonomy" id="243277"/>
    <lineage>
        <taxon>Bacteria</taxon>
        <taxon>Pseudomonadati</taxon>
        <taxon>Pseudomonadota</taxon>
        <taxon>Gammaproteobacteria</taxon>
        <taxon>Vibrionales</taxon>
        <taxon>Vibrionaceae</taxon>
        <taxon>Vibrio</taxon>
    </lineage>
</organism>
<name>DADA_VIBCH</name>
<protein>
    <recommendedName>
        <fullName evidence="1">D-amino acid dehydrogenase</fullName>
        <ecNumber evidence="1">1.4.99.-</ecNumber>
    </recommendedName>
</protein>
<feature type="chain" id="PRO_0000166152" description="D-amino acid dehydrogenase">
    <location>
        <begin position="1"/>
        <end position="421"/>
    </location>
</feature>
<feature type="binding site" evidence="1">
    <location>
        <begin position="4"/>
        <end position="18"/>
    </location>
    <ligand>
        <name>FAD</name>
        <dbReference type="ChEBI" id="CHEBI:57692"/>
    </ligand>
</feature>
<keyword id="KW-0274">FAD</keyword>
<keyword id="KW-0285">Flavoprotein</keyword>
<keyword id="KW-0560">Oxidoreductase</keyword>
<keyword id="KW-1185">Reference proteome</keyword>
<dbReference type="EC" id="1.4.99.-" evidence="1"/>
<dbReference type="EMBL" id="AE003852">
    <property type="protein sequence ID" value="AAF93951.1"/>
    <property type="molecule type" value="Genomic_DNA"/>
</dbReference>
<dbReference type="PIR" id="F82279">
    <property type="entry name" value="F82279"/>
</dbReference>
<dbReference type="RefSeq" id="NP_230435.1">
    <property type="nucleotide sequence ID" value="NC_002505.1"/>
</dbReference>
<dbReference type="SMR" id="Q9KTV1"/>
<dbReference type="STRING" id="243277.VC_0786"/>
<dbReference type="DNASU" id="2615329"/>
<dbReference type="EnsemblBacteria" id="AAF93951">
    <property type="protein sequence ID" value="AAF93951"/>
    <property type="gene ID" value="VC_0786"/>
</dbReference>
<dbReference type="KEGG" id="vch:VC_0786"/>
<dbReference type="PATRIC" id="fig|243277.26.peg.748"/>
<dbReference type="eggNOG" id="COG0665">
    <property type="taxonomic scope" value="Bacteria"/>
</dbReference>
<dbReference type="HOGENOM" id="CLU_007884_9_2_6"/>
<dbReference type="Proteomes" id="UP000000584">
    <property type="component" value="Chromosome 1"/>
</dbReference>
<dbReference type="GO" id="GO:0005737">
    <property type="term" value="C:cytoplasm"/>
    <property type="evidence" value="ECO:0000318"/>
    <property type="project" value="GO_Central"/>
</dbReference>
<dbReference type="GO" id="GO:0005886">
    <property type="term" value="C:plasma membrane"/>
    <property type="evidence" value="ECO:0000318"/>
    <property type="project" value="GO_Central"/>
</dbReference>
<dbReference type="GO" id="GO:0008718">
    <property type="term" value="F:D-amino-acid dehydrogenase activity"/>
    <property type="evidence" value="ECO:0000318"/>
    <property type="project" value="GO_Central"/>
</dbReference>
<dbReference type="GO" id="GO:0055130">
    <property type="term" value="P:D-alanine catabolic process"/>
    <property type="evidence" value="ECO:0000318"/>
    <property type="project" value="GO_Central"/>
</dbReference>
<dbReference type="FunFam" id="3.50.50.60:FF:000020">
    <property type="entry name" value="D-amino acid dehydrogenase"/>
    <property type="match status" value="1"/>
</dbReference>
<dbReference type="Gene3D" id="3.30.9.10">
    <property type="entry name" value="D-Amino Acid Oxidase, subunit A, domain 2"/>
    <property type="match status" value="1"/>
</dbReference>
<dbReference type="Gene3D" id="3.50.50.60">
    <property type="entry name" value="FAD/NAD(P)-binding domain"/>
    <property type="match status" value="2"/>
</dbReference>
<dbReference type="HAMAP" id="MF_01202">
    <property type="entry name" value="DadA"/>
    <property type="match status" value="1"/>
</dbReference>
<dbReference type="InterPro" id="IPR023080">
    <property type="entry name" value="DadA"/>
</dbReference>
<dbReference type="InterPro" id="IPR006076">
    <property type="entry name" value="FAD-dep_OxRdtase"/>
</dbReference>
<dbReference type="InterPro" id="IPR036188">
    <property type="entry name" value="FAD/NAD-bd_sf"/>
</dbReference>
<dbReference type="NCBIfam" id="NF001933">
    <property type="entry name" value="PRK00711.1"/>
    <property type="match status" value="1"/>
</dbReference>
<dbReference type="PANTHER" id="PTHR13847:SF280">
    <property type="entry name" value="D-AMINO ACID DEHYDROGENASE"/>
    <property type="match status" value="1"/>
</dbReference>
<dbReference type="PANTHER" id="PTHR13847">
    <property type="entry name" value="SARCOSINE DEHYDROGENASE-RELATED"/>
    <property type="match status" value="1"/>
</dbReference>
<dbReference type="Pfam" id="PF01266">
    <property type="entry name" value="DAO"/>
    <property type="match status" value="1"/>
</dbReference>
<dbReference type="SUPFAM" id="SSF54373">
    <property type="entry name" value="FAD-linked reductases, C-terminal domain"/>
    <property type="match status" value="1"/>
</dbReference>
<dbReference type="SUPFAM" id="SSF51905">
    <property type="entry name" value="FAD/NAD(P)-binding domain"/>
    <property type="match status" value="1"/>
</dbReference>
<sequence>MMEVLVLGSGVVGLTSAWYLAQAGHDVTVVDRQPRGAEETSFANAGQISYGYSSPWAAPGIPQKALKWMLEKHAPLKIQPSLDPALLSWMGKMLLNCQLSRYQVNKSRMLAIANYSRECLKALNQTYSLDYQGRQRGTLQVFRDEKQLTAIEKDMQLLAQSGVRFELLNVAQCLTHEPGLAPVQEKLVGGLWLPDDETGDCYLFCQQLTELAKQQGVRFHFDCHIQQLVCEGKKIIGVQTDLGLLKADAYVVALGSYSTSLLKPLGIEIPVYPVKGYSLTLPIIDEKFAPQSTVMDETYKVALTRFSDRIRVAGTAELAGFDPAIPEARKATIEMVARDLFPHGGDFAKGQFWTGFRPMTPDGTPIIGATPYTNLYTNTGHGTLGWTMACGSASILADVLTHGESPLSRLGLDLFRYPKAS</sequence>